<proteinExistence type="inferred from homology"/>
<sequence>MTDKRKDGSGKLLYCSFCGKSQHEVRKLIAGPSVYICDECVDLCNDIIREEIKEVAPHRERSALPTPHEIRNHLDDYVIGQEQAKKVLAVAVYNHYKRLRNGDTSNGVELGKSNILLIGPTGSGKTLLAETLARLLDVPFTMADATTLTEAGYVGEDVENIIQKLLQKCDYDVQKAQRGIVYIDEIDKISRKSDNPSITRDVSGEGVQQALLKLIEGTVAAVPPQGGRKHPQQEFLQVDTSKILFICGGAFAGLDKVISHRVETGSGIGFGATVKAKSDKASEGELLAQVEPEDLIKFGLIPEFIGRLPVVATLNELSEEALIQILKEPKNALTKQYQALFNLEGVDLEFRDEALDAIAKKAMARKTGARGLRSIVEAALLDTMYDLPSMEDVEKVVIDESVIDGQSKPLLIYGKPEAQQASGE</sequence>
<feature type="initiator methionine" description="Removed" evidence="1">
    <location>
        <position position="1"/>
    </location>
</feature>
<feature type="chain" id="PRO_0000160354" description="ATP-dependent Clp protease ATP-binding subunit ClpX">
    <location>
        <begin position="2"/>
        <end position="424"/>
    </location>
</feature>
<feature type="domain" description="ClpX-type ZB" evidence="3">
    <location>
        <begin position="2"/>
        <end position="56"/>
    </location>
</feature>
<feature type="binding site" evidence="3">
    <location>
        <position position="15"/>
    </location>
    <ligand>
        <name>Zn(2+)</name>
        <dbReference type="ChEBI" id="CHEBI:29105"/>
    </ligand>
</feature>
<feature type="binding site" evidence="3">
    <location>
        <position position="18"/>
    </location>
    <ligand>
        <name>Zn(2+)</name>
        <dbReference type="ChEBI" id="CHEBI:29105"/>
    </ligand>
</feature>
<feature type="binding site" evidence="3">
    <location>
        <position position="37"/>
    </location>
    <ligand>
        <name>Zn(2+)</name>
        <dbReference type="ChEBI" id="CHEBI:29105"/>
    </ligand>
</feature>
<feature type="binding site" evidence="3">
    <location>
        <position position="40"/>
    </location>
    <ligand>
        <name>Zn(2+)</name>
        <dbReference type="ChEBI" id="CHEBI:29105"/>
    </ligand>
</feature>
<feature type="binding site" evidence="2">
    <location>
        <begin position="120"/>
        <end position="127"/>
    </location>
    <ligand>
        <name>ATP</name>
        <dbReference type="ChEBI" id="CHEBI:30616"/>
    </ligand>
</feature>
<organism>
    <name type="scientific">Escherichia coli O157:H7</name>
    <dbReference type="NCBI Taxonomy" id="83334"/>
    <lineage>
        <taxon>Bacteria</taxon>
        <taxon>Pseudomonadati</taxon>
        <taxon>Pseudomonadota</taxon>
        <taxon>Gammaproteobacteria</taxon>
        <taxon>Enterobacterales</taxon>
        <taxon>Enterobacteriaceae</taxon>
        <taxon>Escherichia</taxon>
    </lineage>
</organism>
<gene>
    <name evidence="2" type="primary">clpX</name>
    <name type="synonym">lopC</name>
    <name type="ordered locus">Z0543</name>
    <name type="ordered locus">ECs0492</name>
</gene>
<name>CLPX_ECO57</name>
<reference key="1">
    <citation type="journal article" date="2001" name="Nature">
        <title>Genome sequence of enterohaemorrhagic Escherichia coli O157:H7.</title>
        <authorList>
            <person name="Perna N.T."/>
            <person name="Plunkett G. III"/>
            <person name="Burland V."/>
            <person name="Mau B."/>
            <person name="Glasner J.D."/>
            <person name="Rose D.J."/>
            <person name="Mayhew G.F."/>
            <person name="Evans P.S."/>
            <person name="Gregor J."/>
            <person name="Kirkpatrick H.A."/>
            <person name="Posfai G."/>
            <person name="Hackett J."/>
            <person name="Klink S."/>
            <person name="Boutin A."/>
            <person name="Shao Y."/>
            <person name="Miller L."/>
            <person name="Grotbeck E.J."/>
            <person name="Davis N.W."/>
            <person name="Lim A."/>
            <person name="Dimalanta E.T."/>
            <person name="Potamousis K."/>
            <person name="Apodaca J."/>
            <person name="Anantharaman T.S."/>
            <person name="Lin J."/>
            <person name="Yen G."/>
            <person name="Schwartz D.C."/>
            <person name="Welch R.A."/>
            <person name="Blattner F.R."/>
        </authorList>
    </citation>
    <scope>NUCLEOTIDE SEQUENCE [LARGE SCALE GENOMIC DNA]</scope>
    <source>
        <strain>O157:H7 / EDL933 / ATCC 700927 / EHEC</strain>
    </source>
</reference>
<reference key="2">
    <citation type="journal article" date="2001" name="DNA Res.">
        <title>Complete genome sequence of enterohemorrhagic Escherichia coli O157:H7 and genomic comparison with a laboratory strain K-12.</title>
        <authorList>
            <person name="Hayashi T."/>
            <person name="Makino K."/>
            <person name="Ohnishi M."/>
            <person name="Kurokawa K."/>
            <person name="Ishii K."/>
            <person name="Yokoyama K."/>
            <person name="Han C.-G."/>
            <person name="Ohtsubo E."/>
            <person name="Nakayama K."/>
            <person name="Murata T."/>
            <person name="Tanaka M."/>
            <person name="Tobe T."/>
            <person name="Iida T."/>
            <person name="Takami H."/>
            <person name="Honda T."/>
            <person name="Sasakawa C."/>
            <person name="Ogasawara N."/>
            <person name="Yasunaga T."/>
            <person name="Kuhara S."/>
            <person name="Shiba T."/>
            <person name="Hattori M."/>
            <person name="Shinagawa H."/>
        </authorList>
    </citation>
    <scope>NUCLEOTIDE SEQUENCE [LARGE SCALE GENOMIC DNA]</scope>
    <source>
        <strain>O157:H7 / Sakai / RIMD 0509952 / EHEC</strain>
    </source>
</reference>
<comment type="function">
    <text evidence="2">ATP-dependent specificity component of the Clp protease. It directs the protease to specific substrates. Can perform chaperone functions in the absence of ClpP.</text>
</comment>
<comment type="subunit">
    <text evidence="2">Component of the ClpX-ClpP complex. Forms a hexameric ring that, in the presence of ATP, binds to fourteen ClpP subunits assembled into a disk-like structure with a central cavity, resembling the structure of eukaryotic proteasomes.</text>
</comment>
<comment type="similarity">
    <text evidence="2">Belongs to the ClpX chaperone family.</text>
</comment>
<protein>
    <recommendedName>
        <fullName evidence="2">ATP-dependent Clp protease ATP-binding subunit ClpX</fullName>
    </recommendedName>
</protein>
<evidence type="ECO:0000250" key="1"/>
<evidence type="ECO:0000255" key="2">
    <source>
        <dbReference type="HAMAP-Rule" id="MF_00175"/>
    </source>
</evidence>
<evidence type="ECO:0000255" key="3">
    <source>
        <dbReference type="PROSITE-ProRule" id="PRU01250"/>
    </source>
</evidence>
<dbReference type="EMBL" id="AE005174">
    <property type="protein sequence ID" value="AAG54788.1"/>
    <property type="molecule type" value="Genomic_DNA"/>
</dbReference>
<dbReference type="EMBL" id="BA000007">
    <property type="protein sequence ID" value="BAB33915.1"/>
    <property type="molecule type" value="Genomic_DNA"/>
</dbReference>
<dbReference type="PIR" id="D90690">
    <property type="entry name" value="D90690"/>
</dbReference>
<dbReference type="PIR" id="H85540">
    <property type="entry name" value="H85540"/>
</dbReference>
<dbReference type="RefSeq" id="NP_308519.1">
    <property type="nucleotide sequence ID" value="NC_002695.1"/>
</dbReference>
<dbReference type="RefSeq" id="WP_000130305.1">
    <property type="nucleotide sequence ID" value="NZ_VOAI01000005.1"/>
</dbReference>
<dbReference type="SMR" id="P0A6H3"/>
<dbReference type="STRING" id="155864.Z0543"/>
<dbReference type="GeneID" id="914594"/>
<dbReference type="GeneID" id="93777016"/>
<dbReference type="KEGG" id="ece:Z0543"/>
<dbReference type="KEGG" id="ecs:ECs_0492"/>
<dbReference type="PATRIC" id="fig|386585.9.peg.595"/>
<dbReference type="eggNOG" id="COG1219">
    <property type="taxonomic scope" value="Bacteria"/>
</dbReference>
<dbReference type="HOGENOM" id="CLU_014218_8_2_6"/>
<dbReference type="OMA" id="LDTMFDL"/>
<dbReference type="Proteomes" id="UP000000558">
    <property type="component" value="Chromosome"/>
</dbReference>
<dbReference type="Proteomes" id="UP000002519">
    <property type="component" value="Chromosome"/>
</dbReference>
<dbReference type="GO" id="GO:0009376">
    <property type="term" value="C:HslUV protease complex"/>
    <property type="evidence" value="ECO:0007669"/>
    <property type="project" value="TreeGrafter"/>
</dbReference>
<dbReference type="GO" id="GO:0005524">
    <property type="term" value="F:ATP binding"/>
    <property type="evidence" value="ECO:0007669"/>
    <property type="project" value="UniProtKB-UniRule"/>
</dbReference>
<dbReference type="GO" id="GO:0016887">
    <property type="term" value="F:ATP hydrolysis activity"/>
    <property type="evidence" value="ECO:0007669"/>
    <property type="project" value="InterPro"/>
</dbReference>
<dbReference type="GO" id="GO:0140662">
    <property type="term" value="F:ATP-dependent protein folding chaperone"/>
    <property type="evidence" value="ECO:0007669"/>
    <property type="project" value="InterPro"/>
</dbReference>
<dbReference type="GO" id="GO:0046983">
    <property type="term" value="F:protein dimerization activity"/>
    <property type="evidence" value="ECO:0007669"/>
    <property type="project" value="InterPro"/>
</dbReference>
<dbReference type="GO" id="GO:0051082">
    <property type="term" value="F:unfolded protein binding"/>
    <property type="evidence" value="ECO:0007669"/>
    <property type="project" value="UniProtKB-UniRule"/>
</dbReference>
<dbReference type="GO" id="GO:0008270">
    <property type="term" value="F:zinc ion binding"/>
    <property type="evidence" value="ECO:0007669"/>
    <property type="project" value="InterPro"/>
</dbReference>
<dbReference type="GO" id="GO:0051301">
    <property type="term" value="P:cell division"/>
    <property type="evidence" value="ECO:0007669"/>
    <property type="project" value="TreeGrafter"/>
</dbReference>
<dbReference type="GO" id="GO:0051603">
    <property type="term" value="P:proteolysis involved in protein catabolic process"/>
    <property type="evidence" value="ECO:0007669"/>
    <property type="project" value="TreeGrafter"/>
</dbReference>
<dbReference type="CDD" id="cd19497">
    <property type="entry name" value="RecA-like_ClpX"/>
    <property type="match status" value="1"/>
</dbReference>
<dbReference type="FunFam" id="1.10.8.60:FF:000002">
    <property type="entry name" value="ATP-dependent Clp protease ATP-binding subunit ClpX"/>
    <property type="match status" value="1"/>
</dbReference>
<dbReference type="FunFam" id="3.40.50.300:FF:000005">
    <property type="entry name" value="ATP-dependent Clp protease ATP-binding subunit ClpX"/>
    <property type="match status" value="1"/>
</dbReference>
<dbReference type="Gene3D" id="1.10.8.60">
    <property type="match status" value="1"/>
</dbReference>
<dbReference type="Gene3D" id="6.20.220.10">
    <property type="entry name" value="ClpX chaperone, C4-type zinc finger domain"/>
    <property type="match status" value="1"/>
</dbReference>
<dbReference type="Gene3D" id="3.40.50.300">
    <property type="entry name" value="P-loop containing nucleotide triphosphate hydrolases"/>
    <property type="match status" value="1"/>
</dbReference>
<dbReference type="HAMAP" id="MF_00175">
    <property type="entry name" value="ClpX"/>
    <property type="match status" value="1"/>
</dbReference>
<dbReference type="InterPro" id="IPR003593">
    <property type="entry name" value="AAA+_ATPase"/>
</dbReference>
<dbReference type="InterPro" id="IPR050052">
    <property type="entry name" value="ATP-dep_Clp_protease_ClpX"/>
</dbReference>
<dbReference type="InterPro" id="IPR003959">
    <property type="entry name" value="ATPase_AAA_core"/>
</dbReference>
<dbReference type="InterPro" id="IPR019489">
    <property type="entry name" value="Clp_ATPase_C"/>
</dbReference>
<dbReference type="InterPro" id="IPR004487">
    <property type="entry name" value="Clp_protease_ATP-bd_su_ClpX"/>
</dbReference>
<dbReference type="InterPro" id="IPR046425">
    <property type="entry name" value="ClpX_bact"/>
</dbReference>
<dbReference type="InterPro" id="IPR027417">
    <property type="entry name" value="P-loop_NTPase"/>
</dbReference>
<dbReference type="InterPro" id="IPR010603">
    <property type="entry name" value="Znf_CppX_C4"/>
</dbReference>
<dbReference type="InterPro" id="IPR038366">
    <property type="entry name" value="Znf_CppX_C4_sf"/>
</dbReference>
<dbReference type="NCBIfam" id="TIGR00382">
    <property type="entry name" value="clpX"/>
    <property type="match status" value="1"/>
</dbReference>
<dbReference type="NCBIfam" id="NF003745">
    <property type="entry name" value="PRK05342.1"/>
    <property type="match status" value="1"/>
</dbReference>
<dbReference type="PANTHER" id="PTHR48102:SF7">
    <property type="entry name" value="ATP-DEPENDENT CLP PROTEASE ATP-BINDING SUBUNIT CLPX-LIKE, MITOCHONDRIAL"/>
    <property type="match status" value="1"/>
</dbReference>
<dbReference type="PANTHER" id="PTHR48102">
    <property type="entry name" value="ATP-DEPENDENT CLP PROTEASE ATP-BINDING SUBUNIT CLPX-LIKE, MITOCHONDRIAL-RELATED"/>
    <property type="match status" value="1"/>
</dbReference>
<dbReference type="Pfam" id="PF07724">
    <property type="entry name" value="AAA_2"/>
    <property type="match status" value="1"/>
</dbReference>
<dbReference type="Pfam" id="PF10431">
    <property type="entry name" value="ClpB_D2-small"/>
    <property type="match status" value="1"/>
</dbReference>
<dbReference type="Pfam" id="PF06689">
    <property type="entry name" value="zf-C4_ClpX"/>
    <property type="match status" value="1"/>
</dbReference>
<dbReference type="SMART" id="SM00382">
    <property type="entry name" value="AAA"/>
    <property type="match status" value="1"/>
</dbReference>
<dbReference type="SMART" id="SM01086">
    <property type="entry name" value="ClpB_D2-small"/>
    <property type="match status" value="1"/>
</dbReference>
<dbReference type="SMART" id="SM00994">
    <property type="entry name" value="zf-C4_ClpX"/>
    <property type="match status" value="1"/>
</dbReference>
<dbReference type="SUPFAM" id="SSF57716">
    <property type="entry name" value="Glucocorticoid receptor-like (DNA-binding domain)"/>
    <property type="match status" value="1"/>
</dbReference>
<dbReference type="SUPFAM" id="SSF52540">
    <property type="entry name" value="P-loop containing nucleoside triphosphate hydrolases"/>
    <property type="match status" value="1"/>
</dbReference>
<dbReference type="PROSITE" id="PS51902">
    <property type="entry name" value="CLPX_ZB"/>
    <property type="match status" value="1"/>
</dbReference>
<keyword id="KW-0067">ATP-binding</keyword>
<keyword id="KW-0143">Chaperone</keyword>
<keyword id="KW-0479">Metal-binding</keyword>
<keyword id="KW-0547">Nucleotide-binding</keyword>
<keyword id="KW-1185">Reference proteome</keyword>
<keyword id="KW-0862">Zinc</keyword>
<accession>P0A6H3</accession>
<accession>P33138</accession>